<sequence length="131" mass="14268">MALWLTVVIALTCLGGLASPSPVTPSPTLKELIEELVNITQNQASLCNGSMVWSVNLTAGMYCAALESLINVSDCSAIQRTQRMLKALCSQKPAAGQISSERSRDTKIEVIQLVKNLLTYVRGVYRHGNFR</sequence>
<keyword id="KW-0202">Cytokine</keyword>
<keyword id="KW-1015">Disulfide bond</keyword>
<keyword id="KW-0325">Glycoprotein</keyword>
<keyword id="KW-1185">Reference proteome</keyword>
<keyword id="KW-0964">Secreted</keyword>
<keyword id="KW-0732">Signal</keyword>
<accession>Q9N0W9</accession>
<dbReference type="EMBL" id="AF244915">
    <property type="protein sequence ID" value="AAF63204.1"/>
    <property type="molecule type" value="mRNA"/>
</dbReference>
<dbReference type="RefSeq" id="NP_001003384.1">
    <property type="nucleotide sequence ID" value="NM_001003384.1"/>
</dbReference>
<dbReference type="SMR" id="Q9N0W9"/>
<dbReference type="FunCoup" id="Q9N0W9">
    <property type="interactions" value="62"/>
</dbReference>
<dbReference type="STRING" id="9615.ENSCAFP00000001250"/>
<dbReference type="GlyCosmos" id="Q9N0W9">
    <property type="glycosylation" value="4 sites, No reported glycans"/>
</dbReference>
<dbReference type="PaxDb" id="9612-ENSCAFP00000001250"/>
<dbReference type="Ensembl" id="ENSCAFT00000001364.5">
    <property type="protein sequence ID" value="ENSCAFP00000001250.4"/>
    <property type="gene ID" value="ENSCAFG00000000878.5"/>
</dbReference>
<dbReference type="Ensembl" id="ENSCAFT00030021587.1">
    <property type="protein sequence ID" value="ENSCAFP00030018820.1"/>
    <property type="gene ID" value="ENSCAFG00030011676.1"/>
</dbReference>
<dbReference type="Ensembl" id="ENSCAFT00845019361.1">
    <property type="protein sequence ID" value="ENSCAFP00845015137.1"/>
    <property type="gene ID" value="ENSCAFG00845010953.1"/>
</dbReference>
<dbReference type="GeneID" id="442990"/>
<dbReference type="KEGG" id="cfa:442990"/>
<dbReference type="CTD" id="3596"/>
<dbReference type="VEuPathDB" id="HostDB:ENSCAFG00845010953"/>
<dbReference type="VGNC" id="VGNC:41936">
    <property type="gene designation" value="IL13"/>
</dbReference>
<dbReference type="eggNOG" id="ENOG502SZKX">
    <property type="taxonomic scope" value="Eukaryota"/>
</dbReference>
<dbReference type="GeneTree" id="ENSGT00390000003225"/>
<dbReference type="InParanoid" id="Q9N0W9"/>
<dbReference type="OrthoDB" id="9447464at2759"/>
<dbReference type="Reactome" id="R-CFA-6785807">
    <property type="pathway name" value="Interleukin-4 and Interleukin-13 signaling"/>
</dbReference>
<dbReference type="Proteomes" id="UP000002254">
    <property type="component" value="Chromosome 11"/>
</dbReference>
<dbReference type="Proteomes" id="UP000694429">
    <property type="component" value="Chromosome 11"/>
</dbReference>
<dbReference type="Proteomes" id="UP000694542">
    <property type="component" value="Unplaced"/>
</dbReference>
<dbReference type="Proteomes" id="UP000805418">
    <property type="component" value="Chromosome 11"/>
</dbReference>
<dbReference type="Bgee" id="ENSCAFG00000000878">
    <property type="expression patterns" value="Expressed in jejunum and 5 other cell types or tissues"/>
</dbReference>
<dbReference type="GO" id="GO:0005737">
    <property type="term" value="C:cytoplasm"/>
    <property type="evidence" value="ECO:0007669"/>
    <property type="project" value="Ensembl"/>
</dbReference>
<dbReference type="GO" id="GO:0009897">
    <property type="term" value="C:external side of plasma membrane"/>
    <property type="evidence" value="ECO:0007669"/>
    <property type="project" value="Ensembl"/>
</dbReference>
<dbReference type="GO" id="GO:0005615">
    <property type="term" value="C:extracellular space"/>
    <property type="evidence" value="ECO:0000318"/>
    <property type="project" value="GO_Central"/>
</dbReference>
<dbReference type="GO" id="GO:0005125">
    <property type="term" value="F:cytokine activity"/>
    <property type="evidence" value="ECO:0007669"/>
    <property type="project" value="UniProtKB-KW"/>
</dbReference>
<dbReference type="GO" id="GO:0005144">
    <property type="term" value="F:interleukin-13 receptor binding"/>
    <property type="evidence" value="ECO:0000318"/>
    <property type="project" value="GO_Central"/>
</dbReference>
<dbReference type="GO" id="GO:0006955">
    <property type="term" value="P:immune response"/>
    <property type="evidence" value="ECO:0007669"/>
    <property type="project" value="InterPro"/>
</dbReference>
<dbReference type="GO" id="GO:0006954">
    <property type="term" value="P:inflammatory response"/>
    <property type="evidence" value="ECO:0000318"/>
    <property type="project" value="GO_Central"/>
</dbReference>
<dbReference type="GO" id="GO:0035772">
    <property type="term" value="P:interleukin-13-mediated signaling pathway"/>
    <property type="evidence" value="ECO:0007669"/>
    <property type="project" value="Ensembl"/>
</dbReference>
<dbReference type="GO" id="GO:0042116">
    <property type="term" value="P:macrophage activation"/>
    <property type="evidence" value="ECO:0007669"/>
    <property type="project" value="Ensembl"/>
</dbReference>
<dbReference type="GO" id="GO:1903660">
    <property type="term" value="P:negative regulation of complement-dependent cytotoxicity"/>
    <property type="evidence" value="ECO:0007669"/>
    <property type="project" value="Ensembl"/>
</dbReference>
<dbReference type="GO" id="GO:2000352">
    <property type="term" value="P:negative regulation of endothelial cell apoptotic process"/>
    <property type="evidence" value="ECO:0007669"/>
    <property type="project" value="Ensembl"/>
</dbReference>
<dbReference type="GO" id="GO:0050728">
    <property type="term" value="P:negative regulation of inflammatory response"/>
    <property type="evidence" value="ECO:0007669"/>
    <property type="project" value="Ensembl"/>
</dbReference>
<dbReference type="GO" id="GO:0120162">
    <property type="term" value="P:positive regulation of cold-induced thermogenesis"/>
    <property type="evidence" value="ECO:0007669"/>
    <property type="project" value="Ensembl"/>
</dbReference>
<dbReference type="GO" id="GO:0002639">
    <property type="term" value="P:positive regulation of immunoglobulin production"/>
    <property type="evidence" value="ECO:0000318"/>
    <property type="project" value="GO_Central"/>
</dbReference>
<dbReference type="GO" id="GO:0032733">
    <property type="term" value="P:positive regulation of interleukin-10 production"/>
    <property type="evidence" value="ECO:0007669"/>
    <property type="project" value="Ensembl"/>
</dbReference>
<dbReference type="GO" id="GO:0043032">
    <property type="term" value="P:positive regulation of macrophage activation"/>
    <property type="evidence" value="ECO:0007669"/>
    <property type="project" value="Ensembl"/>
</dbReference>
<dbReference type="GO" id="GO:0043306">
    <property type="term" value="P:positive regulation of mast cell degranulation"/>
    <property type="evidence" value="ECO:0007669"/>
    <property type="project" value="Ensembl"/>
</dbReference>
<dbReference type="GO" id="GO:0045944">
    <property type="term" value="P:positive regulation of transcription by RNA polymerase II"/>
    <property type="evidence" value="ECO:0007669"/>
    <property type="project" value="Ensembl"/>
</dbReference>
<dbReference type="GO" id="GO:0009624">
    <property type="term" value="P:response to nematode"/>
    <property type="evidence" value="ECO:0007669"/>
    <property type="project" value="Ensembl"/>
</dbReference>
<dbReference type="GO" id="GO:0010269">
    <property type="term" value="P:response to selenium ion"/>
    <property type="evidence" value="ECO:0007669"/>
    <property type="project" value="Ensembl"/>
</dbReference>
<dbReference type="FunFam" id="1.20.1250.10:FF:000029">
    <property type="entry name" value="Interleukin-13"/>
    <property type="match status" value="1"/>
</dbReference>
<dbReference type="Gene3D" id="1.20.1250.10">
    <property type="match status" value="1"/>
</dbReference>
<dbReference type="InterPro" id="IPR009079">
    <property type="entry name" value="4_helix_cytokine-like_core"/>
</dbReference>
<dbReference type="InterPro" id="IPR020470">
    <property type="entry name" value="IL-13"/>
</dbReference>
<dbReference type="InterPro" id="IPR001325">
    <property type="entry name" value="IL-4/IL-13"/>
</dbReference>
<dbReference type="InterPro" id="IPR018096">
    <property type="entry name" value="IL-4/IL-13_CS"/>
</dbReference>
<dbReference type="PANTHER" id="PTHR48486">
    <property type="entry name" value="INTERLEUKIN-13"/>
    <property type="match status" value="1"/>
</dbReference>
<dbReference type="PANTHER" id="PTHR48486:SF1">
    <property type="entry name" value="INTERLEUKIN-13"/>
    <property type="match status" value="1"/>
</dbReference>
<dbReference type="Pfam" id="PF03487">
    <property type="entry name" value="IL13"/>
    <property type="match status" value="1"/>
</dbReference>
<dbReference type="PRINTS" id="PR01929">
    <property type="entry name" value="INTRLEUKIN13"/>
</dbReference>
<dbReference type="SMART" id="SM00190">
    <property type="entry name" value="IL4_13"/>
    <property type="match status" value="1"/>
</dbReference>
<dbReference type="SUPFAM" id="SSF47266">
    <property type="entry name" value="4-helical cytokines"/>
    <property type="match status" value="1"/>
</dbReference>
<dbReference type="PROSITE" id="PS00838">
    <property type="entry name" value="INTERLEUKIN_4_13"/>
    <property type="match status" value="1"/>
</dbReference>
<gene>
    <name type="primary">IL13</name>
</gene>
<organism>
    <name type="scientific">Canis lupus familiaris</name>
    <name type="common">Dog</name>
    <name type="synonym">Canis familiaris</name>
    <dbReference type="NCBI Taxonomy" id="9615"/>
    <lineage>
        <taxon>Eukaryota</taxon>
        <taxon>Metazoa</taxon>
        <taxon>Chordata</taxon>
        <taxon>Craniata</taxon>
        <taxon>Vertebrata</taxon>
        <taxon>Euteleostomi</taxon>
        <taxon>Mammalia</taxon>
        <taxon>Eutheria</taxon>
        <taxon>Laurasiatheria</taxon>
        <taxon>Carnivora</taxon>
        <taxon>Caniformia</taxon>
        <taxon>Canidae</taxon>
        <taxon>Canis</taxon>
    </lineage>
</organism>
<comment type="function">
    <text evidence="2 3 4">Cytokine that plays important roles in allergic inflammation and immune response to parasite infection. Synergizes with IL2 in regulating interferon-gamma synthesis. Stimulates B-cell proliferation, and activation of eosinophils, basophils, and mast cells (By similarity). Plays an important role in controlling IL33 activity by modulating the production of transmembrane and soluble forms of interleukin-1 receptor-like 1/IL1RL1 (By similarity). Displays the capacity to antagonize Th1-driven proinflammatory immune response and downregulates synthesis of many proinflammatory cytokines including IL1, IL6, IL10, IL12 and TNF-alpha through a mechanism that partially involves suppression of NF-kappa-B (By similarity). Also functions on nonhematopoietic cells, including endothelial cells where it induces vascular cell adhesion protein 1/VCAM1, which is important in the recruitment of eosinophils. Exerts its biological effects through its receptors which comprises the IL4R chain and the IL13RA1 chain, to activate JAK1 and TYK2, leading to the activation of STAT6. Aside from IL13RA1, another receptor IL13RA2 acts as a high affinity decoy for IL13 and mediates internalization and depletion of extracellular IL13 (By similarity).</text>
</comment>
<comment type="subunit">
    <text evidence="1">Interacts with IL13RA2.</text>
</comment>
<comment type="subcellular location">
    <subcellularLocation>
        <location>Secreted</location>
    </subcellularLocation>
</comment>
<comment type="similarity">
    <text evidence="6">Belongs to the IL-4/IL-13 family.</text>
</comment>
<reference key="1">
    <citation type="journal article" date="2000" name="J. Interferon Cytokine Res.">
        <title>Canine interleukin-13: molecular cloning of full-length cDNA and expression of biologically active recombinant protein.</title>
        <authorList>
            <person name="Yang S."/>
            <person name="Boroughs K.L."/>
            <person name="McDermott M.J."/>
        </authorList>
    </citation>
    <scope>NUCLEOTIDE SEQUENCE [MRNA]</scope>
</reference>
<protein>
    <recommendedName>
        <fullName>Interleukin-13</fullName>
        <shortName>IL-13</shortName>
    </recommendedName>
</protein>
<evidence type="ECO:0000250" key="1"/>
<evidence type="ECO:0000250" key="2">
    <source>
        <dbReference type="UniProtKB" id="P20109"/>
    </source>
</evidence>
<evidence type="ECO:0000250" key="3">
    <source>
        <dbReference type="UniProtKB" id="P35225"/>
    </source>
</evidence>
<evidence type="ECO:0000250" key="4">
    <source>
        <dbReference type="UniProtKB" id="P42203"/>
    </source>
</evidence>
<evidence type="ECO:0000255" key="5"/>
<evidence type="ECO:0000305" key="6"/>
<name>IL13_CANLF</name>
<proteinExistence type="evidence at transcript level"/>
<feature type="signal peptide" evidence="5">
    <location>
        <begin position="1"/>
        <end position="18"/>
    </location>
</feature>
<feature type="chain" id="PRO_0000247328" description="Interleukin-13">
    <location>
        <begin position="19"/>
        <end position="131"/>
    </location>
</feature>
<feature type="glycosylation site" description="N-linked (GlcNAc...) asparagine" evidence="5">
    <location>
        <position position="38"/>
    </location>
</feature>
<feature type="glycosylation site" description="N-linked (GlcNAc...) asparagine" evidence="5">
    <location>
        <position position="48"/>
    </location>
</feature>
<feature type="glycosylation site" description="N-linked (GlcNAc...) asparagine" evidence="5">
    <location>
        <position position="56"/>
    </location>
</feature>
<feature type="glycosylation site" description="N-linked (GlcNAc...) asparagine" evidence="5">
    <location>
        <position position="71"/>
    </location>
</feature>
<feature type="disulfide bond" evidence="3">
    <location>
        <begin position="47"/>
        <end position="75"/>
    </location>
</feature>
<feature type="disulfide bond" evidence="3">
    <location>
        <begin position="63"/>
        <end position="89"/>
    </location>
</feature>